<gene>
    <name type="primary">CMC4</name>
    <name type="ORF">LELG_01068</name>
</gene>
<dbReference type="EMBL" id="CH981524">
    <property type="protein sequence ID" value="EDK42890.1"/>
    <property type="molecule type" value="Genomic_DNA"/>
</dbReference>
<dbReference type="RefSeq" id="XP_001528548.1">
    <property type="nucleotide sequence ID" value="XM_001528498.1"/>
</dbReference>
<dbReference type="SMR" id="A5DUN2"/>
<dbReference type="FunCoup" id="A5DUN2">
    <property type="interactions" value="80"/>
</dbReference>
<dbReference type="STRING" id="379508.A5DUN2"/>
<dbReference type="GeneID" id="5235656"/>
<dbReference type="KEGG" id="lel:PVL30_001033"/>
<dbReference type="VEuPathDB" id="FungiDB:LELG_01068"/>
<dbReference type="eggNOG" id="ENOG502S7M4">
    <property type="taxonomic scope" value="Eukaryota"/>
</dbReference>
<dbReference type="HOGENOM" id="CLU_177210_0_1_1"/>
<dbReference type="InParanoid" id="A5DUN2"/>
<dbReference type="OMA" id="YQEEKCQ"/>
<dbReference type="OrthoDB" id="13601at2759"/>
<dbReference type="Proteomes" id="UP000001996">
    <property type="component" value="Unassembled WGS sequence"/>
</dbReference>
<dbReference type="GO" id="GO:0005758">
    <property type="term" value="C:mitochondrial intermembrane space"/>
    <property type="evidence" value="ECO:0007669"/>
    <property type="project" value="UniProtKB-SubCell"/>
</dbReference>
<dbReference type="FunFam" id="1.10.287.1130:FF:000008">
    <property type="entry name" value="Cx9C motif-containing protein 4, mitochondrial"/>
    <property type="match status" value="1"/>
</dbReference>
<dbReference type="Gene3D" id="1.10.287.1130">
    <property type="entry name" value="CytochromE C oxidase copper chaperone"/>
    <property type="match status" value="1"/>
</dbReference>
<dbReference type="InterPro" id="IPR027179">
    <property type="entry name" value="CMC4"/>
</dbReference>
<dbReference type="InterPro" id="IPR009069">
    <property type="entry name" value="Cys_alpha_HP_mot_SF"/>
</dbReference>
<dbReference type="PANTHER" id="PTHR15590">
    <property type="entry name" value="CX9C MOTIF-CONTAINING PROTEIN 4"/>
    <property type="match status" value="1"/>
</dbReference>
<dbReference type="PANTHER" id="PTHR15590:SF0">
    <property type="entry name" value="CX9C MOTIF-CONTAINING PROTEIN 4"/>
    <property type="match status" value="1"/>
</dbReference>
<dbReference type="Pfam" id="PF08991">
    <property type="entry name" value="CMC4"/>
    <property type="match status" value="1"/>
</dbReference>
<dbReference type="SUPFAM" id="SSF47072">
    <property type="entry name" value="Cysteine alpha-hairpin motif"/>
    <property type="match status" value="1"/>
</dbReference>
<dbReference type="PROSITE" id="PS51808">
    <property type="entry name" value="CHCH"/>
    <property type="match status" value="1"/>
</dbReference>
<accession>A5DUN2</accession>
<organism>
    <name type="scientific">Lodderomyces elongisporus (strain ATCC 11503 / CBS 2605 / JCM 1781 / NBRC 1676 / NRRL YB-4239)</name>
    <name type="common">Yeast</name>
    <name type="synonym">Saccharomyces elongisporus</name>
    <dbReference type="NCBI Taxonomy" id="379508"/>
    <lineage>
        <taxon>Eukaryota</taxon>
        <taxon>Fungi</taxon>
        <taxon>Dikarya</taxon>
        <taxon>Ascomycota</taxon>
        <taxon>Saccharomycotina</taxon>
        <taxon>Pichiomycetes</taxon>
        <taxon>Debaryomycetaceae</taxon>
        <taxon>Candida/Lodderomyces clade</taxon>
        <taxon>Lodderomyces</taxon>
    </lineage>
</organism>
<reference key="1">
    <citation type="journal article" date="2009" name="Nature">
        <title>Evolution of pathogenicity and sexual reproduction in eight Candida genomes.</title>
        <authorList>
            <person name="Butler G."/>
            <person name="Rasmussen M.D."/>
            <person name="Lin M.F."/>
            <person name="Santos M.A.S."/>
            <person name="Sakthikumar S."/>
            <person name="Munro C.A."/>
            <person name="Rheinbay E."/>
            <person name="Grabherr M."/>
            <person name="Forche A."/>
            <person name="Reedy J.L."/>
            <person name="Agrafioti I."/>
            <person name="Arnaud M.B."/>
            <person name="Bates S."/>
            <person name="Brown A.J.P."/>
            <person name="Brunke S."/>
            <person name="Costanzo M.C."/>
            <person name="Fitzpatrick D.A."/>
            <person name="de Groot P.W.J."/>
            <person name="Harris D."/>
            <person name="Hoyer L.L."/>
            <person name="Hube B."/>
            <person name="Klis F.M."/>
            <person name="Kodira C."/>
            <person name="Lennard N."/>
            <person name="Logue M.E."/>
            <person name="Martin R."/>
            <person name="Neiman A.M."/>
            <person name="Nikolaou E."/>
            <person name="Quail M.A."/>
            <person name="Quinn J."/>
            <person name="Santos M.C."/>
            <person name="Schmitzberger F.F."/>
            <person name="Sherlock G."/>
            <person name="Shah P."/>
            <person name="Silverstein K.A.T."/>
            <person name="Skrzypek M.S."/>
            <person name="Soll D."/>
            <person name="Staggs R."/>
            <person name="Stansfield I."/>
            <person name="Stumpf M.P.H."/>
            <person name="Sudbery P.E."/>
            <person name="Srikantha T."/>
            <person name="Zeng Q."/>
            <person name="Berman J."/>
            <person name="Berriman M."/>
            <person name="Heitman J."/>
            <person name="Gow N.A.R."/>
            <person name="Lorenz M.C."/>
            <person name="Birren B.W."/>
            <person name="Kellis M."/>
            <person name="Cuomo C.A."/>
        </authorList>
    </citation>
    <scope>NUCLEOTIDE SEQUENCE [LARGE SCALE GENOMIC DNA]</scope>
    <source>
        <strain>ATCC 11503 / BCRC 21390 / CBS 2605 / JCM 1781 / NBRC 1676 / NRRL YB-4239</strain>
    </source>
</reference>
<comment type="subcellular location">
    <subcellularLocation>
        <location evidence="1">Mitochondrion intermembrane space</location>
    </subcellularLocation>
    <text evidence="1">Imported into the mitochondria via the mitochondrial disulfide relay system.</text>
</comment>
<comment type="domain">
    <text evidence="1">The twin Cx9C motifs are involved in the recognition by the mitochondrial disulfide relay system.</text>
</comment>
<comment type="similarity">
    <text evidence="3">Belongs to the CMC4 family.</text>
</comment>
<proteinExistence type="inferred from homology"/>
<name>CMC4_LODEL</name>
<keyword id="KW-1015">Disulfide bond</keyword>
<keyword id="KW-0496">Mitochondrion</keyword>
<keyword id="KW-1185">Reference proteome</keyword>
<keyword id="KW-0677">Repeat</keyword>
<sequence>MSEESQASQASQACQAKACAIQDCLQGNGYNEAKCTKYIDDLYQCCKNFYEENGVDAKSVCCPKFKLLQLKLKQRSLGQIDATLLENKRH</sequence>
<feature type="chain" id="PRO_0000408576" description="Cx9C motif-containing protein 4, mitochondrial">
    <location>
        <begin position="1"/>
        <end position="90"/>
    </location>
</feature>
<feature type="domain" description="CHCH" evidence="2">
    <location>
        <begin position="11"/>
        <end position="53"/>
    </location>
</feature>
<feature type="short sequence motif" description="Cx9C motif 1" evidence="2">
    <location>
        <begin position="14"/>
        <end position="24"/>
    </location>
</feature>
<feature type="short sequence motif" description="Cx9C motif 2" evidence="2">
    <location>
        <begin position="35"/>
        <end position="45"/>
    </location>
</feature>
<feature type="disulfide bond" evidence="2">
    <location>
        <begin position="14"/>
        <end position="45"/>
    </location>
</feature>
<feature type="disulfide bond" evidence="2">
    <location>
        <begin position="24"/>
        <end position="35"/>
    </location>
</feature>
<protein>
    <recommendedName>
        <fullName>Cx9C motif-containing protein 4, mitochondrial</fullName>
    </recommendedName>
</protein>
<evidence type="ECO:0000250" key="1"/>
<evidence type="ECO:0000255" key="2">
    <source>
        <dbReference type="PROSITE-ProRule" id="PRU01150"/>
    </source>
</evidence>
<evidence type="ECO:0000305" key="3"/>